<reference key="1">
    <citation type="submission" date="2004-08" db="EMBL/GenBank/DDBJ databases">
        <authorList>
            <consortium name="NIH - Xenopus Gene Collection (XGC) project"/>
        </authorList>
    </citation>
    <scope>NUCLEOTIDE SEQUENCE [LARGE SCALE MRNA]</scope>
</reference>
<evidence type="ECO:0000250" key="1"/>
<evidence type="ECO:0000250" key="2">
    <source>
        <dbReference type="UniProtKB" id="O55242"/>
    </source>
</evidence>
<evidence type="ECO:0000250" key="3">
    <source>
        <dbReference type="UniProtKB" id="Q5BJF2"/>
    </source>
</evidence>
<evidence type="ECO:0000250" key="4">
    <source>
        <dbReference type="UniProtKB" id="Q60492"/>
    </source>
</evidence>
<evidence type="ECO:0000250" key="5">
    <source>
        <dbReference type="UniProtKB" id="Q99720"/>
    </source>
</evidence>
<evidence type="ECO:0000305" key="6"/>
<dbReference type="EMBL" id="BC081292">
    <property type="protein sequence ID" value="AAH81292.1"/>
    <property type="molecule type" value="mRNA"/>
</dbReference>
<dbReference type="RefSeq" id="NP_001008207.1">
    <property type="nucleotide sequence ID" value="NM_001008206.1"/>
</dbReference>
<dbReference type="SMR" id="Q66IM1"/>
<dbReference type="FunCoup" id="Q66IM1">
    <property type="interactions" value="699"/>
</dbReference>
<dbReference type="STRING" id="8364.ENSXETP00000022134"/>
<dbReference type="PaxDb" id="8364-ENSXETP00000034034"/>
<dbReference type="DNASU" id="493569"/>
<dbReference type="GeneID" id="493569"/>
<dbReference type="KEGG" id="xtr:493569"/>
<dbReference type="AGR" id="Xenbase:XB-GENE-5786075"/>
<dbReference type="CTD" id="10280"/>
<dbReference type="Xenbase" id="XB-GENE-5786075">
    <property type="gene designation" value="sigmar1"/>
</dbReference>
<dbReference type="eggNOG" id="KOG4143">
    <property type="taxonomic scope" value="Eukaryota"/>
</dbReference>
<dbReference type="HOGENOM" id="CLU_085469_0_0_1"/>
<dbReference type="InParanoid" id="Q66IM1"/>
<dbReference type="OMA" id="AMYVIHA"/>
<dbReference type="OrthoDB" id="347124at2759"/>
<dbReference type="PhylomeDB" id="Q66IM1"/>
<dbReference type="Proteomes" id="UP000008143">
    <property type="component" value="Chromosome 1"/>
</dbReference>
<dbReference type="GO" id="GO:0031410">
    <property type="term" value="C:cytoplasmic vesicle"/>
    <property type="evidence" value="ECO:0007669"/>
    <property type="project" value="UniProtKB-KW"/>
</dbReference>
<dbReference type="GO" id="GO:0005789">
    <property type="term" value="C:endoplasmic reticulum membrane"/>
    <property type="evidence" value="ECO:0007669"/>
    <property type="project" value="UniProtKB-SubCell"/>
</dbReference>
<dbReference type="GO" id="GO:0016020">
    <property type="term" value="C:membrane"/>
    <property type="evidence" value="ECO:0000250"/>
    <property type="project" value="UniProtKB"/>
</dbReference>
<dbReference type="GO" id="GO:0005637">
    <property type="term" value="C:nuclear inner membrane"/>
    <property type="evidence" value="ECO:0007669"/>
    <property type="project" value="UniProtKB-SubCell"/>
</dbReference>
<dbReference type="GO" id="GO:0005640">
    <property type="term" value="C:nuclear outer membrane"/>
    <property type="evidence" value="ECO:0007669"/>
    <property type="project" value="UniProtKB-SubCell"/>
</dbReference>
<dbReference type="GO" id="GO:0006869">
    <property type="term" value="P:lipid transport"/>
    <property type="evidence" value="ECO:0007669"/>
    <property type="project" value="UniProtKB-KW"/>
</dbReference>
<dbReference type="InterPro" id="IPR006716">
    <property type="entry name" value="ERG2_sigma1_rcpt-like"/>
</dbReference>
<dbReference type="PANTHER" id="PTHR10868">
    <property type="entry name" value="SIGMA 1-TYPE OPIOID RECEPTOR-RELATED"/>
    <property type="match status" value="1"/>
</dbReference>
<dbReference type="PANTHER" id="PTHR10868:SF1">
    <property type="entry name" value="SIGMA NON-OPIOID INTRACELLULAR RECEPTOR 1"/>
    <property type="match status" value="1"/>
</dbReference>
<dbReference type="Pfam" id="PF04622">
    <property type="entry name" value="ERG2_Sigma1R"/>
    <property type="match status" value="1"/>
</dbReference>
<protein>
    <recommendedName>
        <fullName>Sigma non-opioid intracellular receptor 1</fullName>
    </recommendedName>
    <alternativeName>
        <fullName>Sigma 1-type opioid receptor</fullName>
        <shortName>Sigma1-receptor</shortName>
        <shortName>Sigma1R</shortName>
    </alternativeName>
</protein>
<comment type="function">
    <text evidence="1">May function in lipid transport from the endoplasmic reticulum and be involved in a wide array of cellular functions probably through regulation of the biogenesis of lipid microdomains at the plasma membrane. May regulate calcium efflux at the endoplasmic reticulum (By similarity).</text>
</comment>
<comment type="subunit">
    <text evidence="5">Homotrimer (By similarity).</text>
</comment>
<comment type="subcellular location">
    <subcellularLocation>
        <location evidence="5">Nucleus inner membrane</location>
    </subcellularLocation>
    <subcellularLocation>
        <location evidence="5">Nucleus outer membrane</location>
    </subcellularLocation>
    <subcellularLocation>
        <location evidence="5">Nucleus envelope</location>
    </subcellularLocation>
    <subcellularLocation>
        <location evidence="5">Cytoplasmic vesicle</location>
    </subcellularLocation>
    <subcellularLocation>
        <location evidence="5">Endoplasmic reticulum membrane</location>
    </subcellularLocation>
    <subcellularLocation>
        <location evidence="5">Membrane</location>
        <topology evidence="5">Single-pass membrane protein</topology>
    </subcellularLocation>
    <text evidence="2 5">During interphase, detected at the inner and outer nuclear membrane and the endoplasmic reticulum. Detected on cytoplasmic vesicles during mitosis (By similarity). Targeted to lipid droplets, cholesterol and galactosylceramide-enriched domains of the endoplasmic reticulum (By similarity).</text>
</comment>
<comment type="domain">
    <text evidence="5">The C-terminal helices form a flat, hydrophobic surface that is probably tightly associated with the cytosolic surface of the endoplasmic reticulum membrane.</text>
</comment>
<comment type="miscellaneous">
    <text evidence="3">Sigma receptors are classified into two subtypes (Sigma-1 and Sigma-2) based on their different pharmacological profile.</text>
</comment>
<comment type="similarity">
    <text evidence="6">Belongs to the ERG2 family.</text>
</comment>
<sequence length="221" mass="24601">MALWRGLRAVLAVAGLAVAVQLLRGWLGSKSYVFNREEIARLAKEHSGLDYEVAFSKIITELRKKHPGRILPDEDLQWVFVNAGGWMGSMCLLHASLTEYVLLFGTAVDTSGHSGRYWAEISDTILSGTFRQWKEGSTKSEIFYPGDTIVHEVGEATSVQWSAGTWMVEYGRGFIPSTLGFALADTIFSTQDFLTLFYTVKVYGKALLLETSTHLSELGFF</sequence>
<keyword id="KW-0968">Cytoplasmic vesicle</keyword>
<keyword id="KW-0256">Endoplasmic reticulum</keyword>
<keyword id="KW-0445">Lipid transport</keyword>
<keyword id="KW-0472">Membrane</keyword>
<keyword id="KW-0539">Nucleus</keyword>
<keyword id="KW-0675">Receptor</keyword>
<keyword id="KW-1185">Reference proteome</keyword>
<keyword id="KW-0812">Transmembrane</keyword>
<keyword id="KW-1133">Transmembrane helix</keyword>
<keyword id="KW-0813">Transport</keyword>
<proteinExistence type="evidence at transcript level"/>
<accession>Q66IM1</accession>
<name>SGMR1_XENTR</name>
<gene>
    <name type="primary">sigmar1</name>
    <name type="synonym">oprs1</name>
</gene>
<feature type="chain" id="PRO_0000268661" description="Sigma non-opioid intracellular receptor 1">
    <location>
        <begin position="1"/>
        <end position="221"/>
    </location>
</feature>
<feature type="topological domain" description="Lumenal" evidence="5">
    <location>
        <begin position="1"/>
        <end position="4"/>
    </location>
</feature>
<feature type="transmembrane region" description="Helical" evidence="5">
    <location>
        <begin position="5"/>
        <end position="27"/>
    </location>
</feature>
<feature type="topological domain" description="Cytoplasmic" evidence="5">
    <location>
        <begin position="28"/>
        <end position="221"/>
    </location>
</feature>
<feature type="region of interest" description="Important for ligand-binding" evidence="4">
    <location>
        <begin position="96"/>
        <end position="103"/>
    </location>
</feature>
<feature type="region of interest" description="C-terminal hydrophobic region" evidence="6">
    <location>
        <begin position="174"/>
        <end position="221"/>
    </location>
</feature>
<feature type="site" description="Important for ligand binding" evidence="5">
    <location>
        <position position="123"/>
    </location>
</feature>
<feature type="site" description="Important for ligand binding" evidence="5">
    <location>
        <position position="169"/>
    </location>
</feature>
<organism>
    <name type="scientific">Xenopus tropicalis</name>
    <name type="common">Western clawed frog</name>
    <name type="synonym">Silurana tropicalis</name>
    <dbReference type="NCBI Taxonomy" id="8364"/>
    <lineage>
        <taxon>Eukaryota</taxon>
        <taxon>Metazoa</taxon>
        <taxon>Chordata</taxon>
        <taxon>Craniata</taxon>
        <taxon>Vertebrata</taxon>
        <taxon>Euteleostomi</taxon>
        <taxon>Amphibia</taxon>
        <taxon>Batrachia</taxon>
        <taxon>Anura</taxon>
        <taxon>Pipoidea</taxon>
        <taxon>Pipidae</taxon>
        <taxon>Xenopodinae</taxon>
        <taxon>Xenopus</taxon>
        <taxon>Silurana</taxon>
    </lineage>
</organism>